<comment type="function">
    <text evidence="1">Usually encoded in the trnK tRNA gene intron. Probably assists in splicing its own and other chloroplast group II introns.</text>
</comment>
<comment type="subcellular location">
    <subcellularLocation>
        <location>Plastid</location>
        <location>Chloroplast</location>
    </subcellularLocation>
</comment>
<comment type="similarity">
    <text evidence="1">Belongs to the intron maturase 2 family. MatK subfamily.</text>
</comment>
<protein>
    <recommendedName>
        <fullName evidence="1">Maturase K</fullName>
    </recommendedName>
    <alternativeName>
        <fullName evidence="1">Intron maturase</fullName>
    </alternativeName>
</protein>
<keyword id="KW-0150">Chloroplast</keyword>
<keyword id="KW-0507">mRNA processing</keyword>
<keyword id="KW-0934">Plastid</keyword>
<keyword id="KW-0694">RNA-binding</keyword>
<keyword id="KW-0819">tRNA processing</keyword>
<geneLocation type="chloroplast"/>
<name>MATK_TRIHY</name>
<reference key="1">
    <citation type="book" date="2003" name="Advances in legume systematics - part 10">
        <title>Phylogenetic analyses of tribes Trifolieae and Vicieae based on sequences of the plastid gene matK (Papilionoideae: Leguminosae).</title>
        <editorList>
            <person name="Klitgaard B.B."/>
            <person name="Bruneau A."/>
        </editorList>
        <authorList>
            <person name="Steele K.P."/>
            <person name="Wojciechowski M.F."/>
        </authorList>
    </citation>
    <scope>NUCLEOTIDE SEQUENCE [GENOMIC DNA]</scope>
</reference>
<evidence type="ECO:0000255" key="1">
    <source>
        <dbReference type="HAMAP-Rule" id="MF_01390"/>
    </source>
</evidence>
<accession>Q8MCN0</accession>
<proteinExistence type="inferred from homology"/>
<dbReference type="EMBL" id="AF522125">
    <property type="protein sequence ID" value="AAM82117.1"/>
    <property type="molecule type" value="Genomic_DNA"/>
</dbReference>
<dbReference type="GO" id="GO:0009507">
    <property type="term" value="C:chloroplast"/>
    <property type="evidence" value="ECO:0007669"/>
    <property type="project" value="UniProtKB-SubCell"/>
</dbReference>
<dbReference type="GO" id="GO:0003723">
    <property type="term" value="F:RNA binding"/>
    <property type="evidence" value="ECO:0007669"/>
    <property type="project" value="UniProtKB-KW"/>
</dbReference>
<dbReference type="GO" id="GO:0006397">
    <property type="term" value="P:mRNA processing"/>
    <property type="evidence" value="ECO:0007669"/>
    <property type="project" value="UniProtKB-KW"/>
</dbReference>
<dbReference type="GO" id="GO:0008380">
    <property type="term" value="P:RNA splicing"/>
    <property type="evidence" value="ECO:0007669"/>
    <property type="project" value="UniProtKB-UniRule"/>
</dbReference>
<dbReference type="GO" id="GO:0008033">
    <property type="term" value="P:tRNA processing"/>
    <property type="evidence" value="ECO:0007669"/>
    <property type="project" value="UniProtKB-KW"/>
</dbReference>
<dbReference type="HAMAP" id="MF_01390">
    <property type="entry name" value="MatK"/>
    <property type="match status" value="1"/>
</dbReference>
<dbReference type="InterPro" id="IPR024937">
    <property type="entry name" value="Domain_X"/>
</dbReference>
<dbReference type="InterPro" id="IPR002866">
    <property type="entry name" value="Maturase_MatK"/>
</dbReference>
<dbReference type="InterPro" id="IPR024942">
    <property type="entry name" value="Maturase_MatK_N"/>
</dbReference>
<dbReference type="PANTHER" id="PTHR34811">
    <property type="entry name" value="MATURASE K"/>
    <property type="match status" value="1"/>
</dbReference>
<dbReference type="PANTHER" id="PTHR34811:SF1">
    <property type="entry name" value="MATURASE K"/>
    <property type="match status" value="1"/>
</dbReference>
<dbReference type="Pfam" id="PF01348">
    <property type="entry name" value="Intron_maturas2"/>
    <property type="match status" value="1"/>
</dbReference>
<dbReference type="Pfam" id="PF01824">
    <property type="entry name" value="MatK_N"/>
    <property type="match status" value="1"/>
</dbReference>
<organism>
    <name type="scientific">Trifolium hybridum</name>
    <name type="common">Alsike clover</name>
    <dbReference type="NCBI Taxonomy" id="74517"/>
    <lineage>
        <taxon>Eukaryota</taxon>
        <taxon>Viridiplantae</taxon>
        <taxon>Streptophyta</taxon>
        <taxon>Embryophyta</taxon>
        <taxon>Tracheophyta</taxon>
        <taxon>Spermatophyta</taxon>
        <taxon>Magnoliopsida</taxon>
        <taxon>eudicotyledons</taxon>
        <taxon>Gunneridae</taxon>
        <taxon>Pentapetalae</taxon>
        <taxon>rosids</taxon>
        <taxon>fabids</taxon>
        <taxon>Fabales</taxon>
        <taxon>Fabaceae</taxon>
        <taxon>Papilionoideae</taxon>
        <taxon>50 kb inversion clade</taxon>
        <taxon>NPAAA clade</taxon>
        <taxon>Hologalegina</taxon>
        <taxon>IRL clade</taxon>
        <taxon>Trifolieae</taxon>
        <taxon>Trifolium</taxon>
    </lineage>
</organism>
<feature type="chain" id="PRO_0000143747" description="Maturase K">
    <location>
        <begin position="1"/>
        <end position="506"/>
    </location>
</feature>
<gene>
    <name evidence="1" type="primary">matK</name>
</gene>
<sequence length="506" mass="60920">MKEYRVYLERARSRQQDFLYPLIFREYIYGLAYSHNFNRSIFVENGSYDNKYSLLNVKRLITRMSQQNHLIISANDSNKNPFLGYNKNFYSQIISEGFAIVVEIPFFLQLSSSLEEAEIIKSYKNVRSIHSIFPFLEDKFTYLNYVSDIRIPYPIHLEILVQILRYWVKDVPFFHLLRLFLYDFYNRNCFIPTKKSISTFSKSNPRLFLFLYNFYVCEYESIFLFLRNKSSHLRLKSFSVFFERIFFYAKREHLVEVFSKDFSYTLPFFKDPNIHYVRYQGKCILASKNVPFLMNKWKHYFIHLWQCFFDVWSQPRTININQLSEHSFQLLGYFSNVRLNRSVVRSQMLQNTFLIEIVSKKLDIIVPIIPLIRSLAKAKFCNVLGHPISKPVWADSSDFDIIERFLRICRNLSHYYNGSSKKKSLYRIKYILRLSCIKTLACKHKSTVRAFLKRSGSEELLEEFFTEEEEILSLIFPRDSFTLHRFHRNRIWYLDILFSNDLVNDE</sequence>